<gene>
    <name type="primary">RABA3</name>
    <name type="ordered locus">At1g01200</name>
    <name type="ORF">F6F3.1</name>
</gene>
<sequence length="237" mass="26250">MNEEMSGESPENNKHVKKPTMPEKIDYVFKVVVIGDSAVGKTQLLSRFTHNEFCYDSKSTIGVEFQTRTITLRGKLVKAQIWDTAGQERYRAVTSAYYRGALGAMVVYDITKRLSFDHVARWVEELRAHADDSAVIMLVGNKADLSVGKRAVPTEDAVEFAETQRLFFSEVSALSGGNVDEAFFRLLEEIFSRVVVSRKAMESDGGATVKLDGSRIDVISGSDLETSNIKEQASCSC</sequence>
<evidence type="ECO:0000250" key="1"/>
<evidence type="ECO:0000269" key="2">
    <source>
    </source>
</evidence>
<evidence type="ECO:0000305" key="3"/>
<evidence type="ECO:0000305" key="4">
    <source>
    </source>
</evidence>
<reference key="1">
    <citation type="journal article" date="2000" name="Nature">
        <title>Sequence and analysis of chromosome 1 of the plant Arabidopsis thaliana.</title>
        <authorList>
            <person name="Theologis A."/>
            <person name="Ecker J.R."/>
            <person name="Palm C.J."/>
            <person name="Federspiel N.A."/>
            <person name="Kaul S."/>
            <person name="White O."/>
            <person name="Alonso J."/>
            <person name="Altafi H."/>
            <person name="Araujo R."/>
            <person name="Bowman C.L."/>
            <person name="Brooks S.Y."/>
            <person name="Buehler E."/>
            <person name="Chan A."/>
            <person name="Chao Q."/>
            <person name="Chen H."/>
            <person name="Cheuk R.F."/>
            <person name="Chin C.W."/>
            <person name="Chung M.K."/>
            <person name="Conn L."/>
            <person name="Conway A.B."/>
            <person name="Conway A.R."/>
            <person name="Creasy T.H."/>
            <person name="Dewar K."/>
            <person name="Dunn P."/>
            <person name="Etgu P."/>
            <person name="Feldblyum T.V."/>
            <person name="Feng J.-D."/>
            <person name="Fong B."/>
            <person name="Fujii C.Y."/>
            <person name="Gill J.E."/>
            <person name="Goldsmith A.D."/>
            <person name="Haas B."/>
            <person name="Hansen N.F."/>
            <person name="Hughes B."/>
            <person name="Huizar L."/>
            <person name="Hunter J.L."/>
            <person name="Jenkins J."/>
            <person name="Johnson-Hopson C."/>
            <person name="Khan S."/>
            <person name="Khaykin E."/>
            <person name="Kim C.J."/>
            <person name="Koo H.L."/>
            <person name="Kremenetskaia I."/>
            <person name="Kurtz D.B."/>
            <person name="Kwan A."/>
            <person name="Lam B."/>
            <person name="Langin-Hooper S."/>
            <person name="Lee A."/>
            <person name="Lee J.M."/>
            <person name="Lenz C.A."/>
            <person name="Li J.H."/>
            <person name="Li Y.-P."/>
            <person name="Lin X."/>
            <person name="Liu S.X."/>
            <person name="Liu Z.A."/>
            <person name="Luros J.S."/>
            <person name="Maiti R."/>
            <person name="Marziali A."/>
            <person name="Militscher J."/>
            <person name="Miranda M."/>
            <person name="Nguyen M."/>
            <person name="Nierman W.C."/>
            <person name="Osborne B.I."/>
            <person name="Pai G."/>
            <person name="Peterson J."/>
            <person name="Pham P.K."/>
            <person name="Rizzo M."/>
            <person name="Rooney T."/>
            <person name="Rowley D."/>
            <person name="Sakano H."/>
            <person name="Salzberg S.L."/>
            <person name="Schwartz J.R."/>
            <person name="Shinn P."/>
            <person name="Southwick A.M."/>
            <person name="Sun H."/>
            <person name="Tallon L.J."/>
            <person name="Tambunga G."/>
            <person name="Toriumi M.J."/>
            <person name="Town C.D."/>
            <person name="Utterback T."/>
            <person name="Van Aken S."/>
            <person name="Vaysberg M."/>
            <person name="Vysotskaia V.S."/>
            <person name="Walker M."/>
            <person name="Wu D."/>
            <person name="Yu G."/>
            <person name="Fraser C.M."/>
            <person name="Venter J.C."/>
            <person name="Davis R.W."/>
        </authorList>
    </citation>
    <scope>NUCLEOTIDE SEQUENCE [LARGE SCALE GENOMIC DNA]</scope>
    <source>
        <strain>cv. Columbia</strain>
    </source>
</reference>
<reference key="2">
    <citation type="journal article" date="2017" name="Plant J.">
        <title>Araport11: a complete reannotation of the Arabidopsis thaliana reference genome.</title>
        <authorList>
            <person name="Cheng C.Y."/>
            <person name="Krishnakumar V."/>
            <person name="Chan A.P."/>
            <person name="Thibaud-Nissen F."/>
            <person name="Schobel S."/>
            <person name="Town C.D."/>
        </authorList>
    </citation>
    <scope>GENOME REANNOTATION</scope>
    <source>
        <strain>cv. Columbia</strain>
    </source>
</reference>
<reference key="3">
    <citation type="submission" date="2003-11" db="EMBL/GenBank/DDBJ databases">
        <title>Arabidopsis cDNA clones.</title>
        <authorList>
            <person name="Shinn P."/>
            <person name="Chen H."/>
            <person name="Cheuk R.F."/>
            <person name="Kim C.J."/>
            <person name="Ecker J.R."/>
        </authorList>
    </citation>
    <scope>NUCLEOTIDE SEQUENCE [LARGE SCALE MRNA]</scope>
    <source>
        <strain>cv. Columbia</strain>
    </source>
</reference>
<reference key="4">
    <citation type="submission" date="2003-12" db="EMBL/GenBank/DDBJ databases">
        <title>Arabidopsis ORF clones.</title>
        <authorList>
            <person name="Shinn P."/>
            <person name="Chen H."/>
            <person name="Cheuk R.F."/>
            <person name="Kim C.J."/>
            <person name="Ecker J.R."/>
        </authorList>
    </citation>
    <scope>NUCLEOTIDE SEQUENCE [LARGE SCALE MRNA]</scope>
    <source>
        <strain>cv. Columbia</strain>
    </source>
</reference>
<reference key="5">
    <citation type="journal article" date="2003" name="Plant Physiol.">
        <title>Analysis of the small GTPase gene superfamily of Arabidopsis.</title>
        <authorList>
            <person name="Vernoud V."/>
            <person name="Horton A.C."/>
            <person name="Yang Z."/>
            <person name="Nielsen E."/>
        </authorList>
    </citation>
    <scope>GENE FAMILY</scope>
    <scope>NOMENCLATURE</scope>
</reference>
<reference key="6">
    <citation type="journal article" date="2008" name="Plant Cell">
        <title>Rab-A2 and Rab-A3 GTPases define a trans-Golgi endosomal membrane domain in Arabidopsis that contributes substantially to the cell plate.</title>
        <authorList>
            <person name="Chow C.M."/>
            <person name="Neto H."/>
            <person name="Foucart C."/>
            <person name="Moore I."/>
        </authorList>
    </citation>
    <scope>SUBCELLULAR LOCATION</scope>
    <scope>TISSUE SPECIFICITY</scope>
</reference>
<name>RABA3_ARATH</name>
<feature type="chain" id="PRO_0000407343" description="Ras-related protein RABA3">
    <location>
        <begin position="1"/>
        <end position="237"/>
    </location>
</feature>
<feature type="short sequence motif" description="Effector region" evidence="1">
    <location>
        <begin position="57"/>
        <end position="65"/>
    </location>
</feature>
<feature type="binding site" evidence="1">
    <location>
        <begin position="35"/>
        <end position="42"/>
    </location>
    <ligand>
        <name>GTP</name>
        <dbReference type="ChEBI" id="CHEBI:37565"/>
    </ligand>
</feature>
<feature type="binding site" evidence="1">
    <location>
        <begin position="83"/>
        <end position="87"/>
    </location>
    <ligand>
        <name>GTP</name>
        <dbReference type="ChEBI" id="CHEBI:37565"/>
    </ligand>
</feature>
<feature type="binding site" evidence="1">
    <location>
        <begin position="141"/>
        <end position="144"/>
    </location>
    <ligand>
        <name>GTP</name>
        <dbReference type="ChEBI" id="CHEBI:37565"/>
    </ligand>
</feature>
<feature type="binding site" evidence="1">
    <location>
        <begin position="172"/>
        <end position="173"/>
    </location>
    <ligand>
        <name>GTP</name>
        <dbReference type="ChEBI" id="CHEBI:37565"/>
    </ligand>
</feature>
<feature type="modified residue" description="Cysteine methyl ester" evidence="1">
    <location>
        <position position="237"/>
    </location>
</feature>
<feature type="lipid moiety-binding region" description="S-geranylgeranyl cysteine" evidence="1">
    <location>
        <position position="235"/>
    </location>
</feature>
<feature type="lipid moiety-binding region" description="S-geranylgeranyl cysteine" evidence="1">
    <location>
        <position position="237"/>
    </location>
</feature>
<dbReference type="EMBL" id="AC023628">
    <property type="protein sequence ID" value="AAF97325.1"/>
    <property type="molecule type" value="Genomic_DNA"/>
</dbReference>
<dbReference type="EMBL" id="CP002684">
    <property type="protein sequence ID" value="AEE27253.1"/>
    <property type="molecule type" value="Genomic_DNA"/>
</dbReference>
<dbReference type="EMBL" id="BT010707">
    <property type="protein sequence ID" value="AAR20764.1"/>
    <property type="molecule type" value="mRNA"/>
</dbReference>
<dbReference type="EMBL" id="BT010979">
    <property type="protein sequence ID" value="AAR24757.1"/>
    <property type="molecule type" value="mRNA"/>
</dbReference>
<dbReference type="PIR" id="B86142">
    <property type="entry name" value="B86142"/>
</dbReference>
<dbReference type="RefSeq" id="NP_171628.2">
    <property type="nucleotide sequence ID" value="NM_100002.4"/>
</dbReference>
<dbReference type="SMR" id="Q9LNK1"/>
<dbReference type="BioGRID" id="24728">
    <property type="interactions" value="3"/>
</dbReference>
<dbReference type="FunCoup" id="Q9LNK1">
    <property type="interactions" value="286"/>
</dbReference>
<dbReference type="IntAct" id="Q9LNK1">
    <property type="interactions" value="2"/>
</dbReference>
<dbReference type="STRING" id="3702.Q9LNK1"/>
<dbReference type="GlyGen" id="Q9LNK1">
    <property type="glycosylation" value="1 site"/>
</dbReference>
<dbReference type="iPTMnet" id="Q9LNK1"/>
<dbReference type="PaxDb" id="3702-AT1G01200.1"/>
<dbReference type="ProteomicsDB" id="236497"/>
<dbReference type="EnsemblPlants" id="AT1G01200.1">
    <property type="protein sequence ID" value="AT1G01200.1"/>
    <property type="gene ID" value="AT1G01200"/>
</dbReference>
<dbReference type="GeneID" id="839493"/>
<dbReference type="Gramene" id="AT1G01200.1">
    <property type="protein sequence ID" value="AT1G01200.1"/>
    <property type="gene ID" value="AT1G01200"/>
</dbReference>
<dbReference type="KEGG" id="ath:AT1G01200"/>
<dbReference type="Araport" id="AT1G01200"/>
<dbReference type="TAIR" id="AT1G01200">
    <property type="gene designation" value="RABA3"/>
</dbReference>
<dbReference type="eggNOG" id="KOG0087">
    <property type="taxonomic scope" value="Eukaryota"/>
</dbReference>
<dbReference type="HOGENOM" id="CLU_041217_23_0_1"/>
<dbReference type="InParanoid" id="Q9LNK1"/>
<dbReference type="OMA" id="NFIIKAQ"/>
<dbReference type="OrthoDB" id="1864332at2759"/>
<dbReference type="PhylomeDB" id="Q9LNK1"/>
<dbReference type="PRO" id="PR:Q9LNK1"/>
<dbReference type="Proteomes" id="UP000006548">
    <property type="component" value="Chromosome 1"/>
</dbReference>
<dbReference type="ExpressionAtlas" id="Q9LNK1">
    <property type="expression patterns" value="baseline and differential"/>
</dbReference>
<dbReference type="GO" id="GO:0009504">
    <property type="term" value="C:cell plate"/>
    <property type="evidence" value="ECO:0000314"/>
    <property type="project" value="TAIR"/>
</dbReference>
<dbReference type="GO" id="GO:0005768">
    <property type="term" value="C:endosome"/>
    <property type="evidence" value="ECO:0000314"/>
    <property type="project" value="TAIR"/>
</dbReference>
<dbReference type="GO" id="GO:0010008">
    <property type="term" value="C:endosome membrane"/>
    <property type="evidence" value="ECO:0007669"/>
    <property type="project" value="UniProtKB-SubCell"/>
</dbReference>
<dbReference type="GO" id="GO:0005576">
    <property type="term" value="C:extracellular region"/>
    <property type="evidence" value="ECO:0007005"/>
    <property type="project" value="TAIR"/>
</dbReference>
<dbReference type="GO" id="GO:0005794">
    <property type="term" value="C:Golgi apparatus"/>
    <property type="evidence" value="ECO:0007669"/>
    <property type="project" value="UniProtKB-SubCell"/>
</dbReference>
<dbReference type="GO" id="GO:0005634">
    <property type="term" value="C:nucleus"/>
    <property type="evidence" value="ECO:0007005"/>
    <property type="project" value="TAIR"/>
</dbReference>
<dbReference type="GO" id="GO:0005525">
    <property type="term" value="F:GTP binding"/>
    <property type="evidence" value="ECO:0007669"/>
    <property type="project" value="UniProtKB-KW"/>
</dbReference>
<dbReference type="GO" id="GO:0003924">
    <property type="term" value="F:GTPase activity"/>
    <property type="evidence" value="ECO:0007669"/>
    <property type="project" value="InterPro"/>
</dbReference>
<dbReference type="GO" id="GO:0042546">
    <property type="term" value="P:cell wall biogenesis"/>
    <property type="evidence" value="ECO:0000315"/>
    <property type="project" value="TAIR"/>
</dbReference>
<dbReference type="GO" id="GO:0015031">
    <property type="term" value="P:protein transport"/>
    <property type="evidence" value="ECO:0007669"/>
    <property type="project" value="UniProtKB-KW"/>
</dbReference>
<dbReference type="CDD" id="cd01868">
    <property type="entry name" value="Rab11_like"/>
    <property type="match status" value="1"/>
</dbReference>
<dbReference type="FunFam" id="3.40.50.300:FF:001217">
    <property type="entry name" value="Ras-related protein RABA3"/>
    <property type="match status" value="1"/>
</dbReference>
<dbReference type="Gene3D" id="3.40.50.300">
    <property type="entry name" value="P-loop containing nucleotide triphosphate hydrolases"/>
    <property type="match status" value="1"/>
</dbReference>
<dbReference type="InterPro" id="IPR027417">
    <property type="entry name" value="P-loop_NTPase"/>
</dbReference>
<dbReference type="InterPro" id="IPR050209">
    <property type="entry name" value="Rab_GTPases_membrane_traffic"/>
</dbReference>
<dbReference type="InterPro" id="IPR005225">
    <property type="entry name" value="Small_GTP-bd"/>
</dbReference>
<dbReference type="InterPro" id="IPR001806">
    <property type="entry name" value="Small_GTPase"/>
</dbReference>
<dbReference type="NCBIfam" id="TIGR00231">
    <property type="entry name" value="small_GTP"/>
    <property type="match status" value="1"/>
</dbReference>
<dbReference type="PANTHER" id="PTHR47979">
    <property type="entry name" value="DRAB11-RELATED"/>
    <property type="match status" value="1"/>
</dbReference>
<dbReference type="Pfam" id="PF00071">
    <property type="entry name" value="Ras"/>
    <property type="match status" value="1"/>
</dbReference>
<dbReference type="PRINTS" id="PR00449">
    <property type="entry name" value="RASTRNSFRMNG"/>
</dbReference>
<dbReference type="SMART" id="SM00175">
    <property type="entry name" value="RAB"/>
    <property type="match status" value="1"/>
</dbReference>
<dbReference type="SMART" id="SM00176">
    <property type="entry name" value="RAN"/>
    <property type="match status" value="1"/>
</dbReference>
<dbReference type="SMART" id="SM00173">
    <property type="entry name" value="RAS"/>
    <property type="match status" value="1"/>
</dbReference>
<dbReference type="SMART" id="SM00174">
    <property type="entry name" value="RHO"/>
    <property type="match status" value="1"/>
</dbReference>
<dbReference type="SUPFAM" id="SSF52540">
    <property type="entry name" value="P-loop containing nucleoside triphosphate hydrolases"/>
    <property type="match status" value="1"/>
</dbReference>
<dbReference type="PROSITE" id="PS51419">
    <property type="entry name" value="RAB"/>
    <property type="match status" value="1"/>
</dbReference>
<comment type="function">
    <text evidence="1">Intracellular vesicle trafficking and protein transport.</text>
</comment>
<comment type="subcellular location">
    <subcellularLocation>
        <location evidence="2">Endosome membrane</location>
    </subcellularLocation>
    <subcellularLocation>
        <location evidence="4">Golgi apparatus</location>
        <location evidence="4">trans-Golgi network membrane</location>
        <topology evidence="4">Lipid-anchor</topology>
    </subcellularLocation>
    <text>During cytokinesis located to the growing margins of the cell plate.</text>
</comment>
<comment type="tissue specificity">
    <text evidence="2">Expressed in root tips.</text>
</comment>
<comment type="similarity">
    <text evidence="3">Belongs to the small GTPase superfamily. Rab family.</text>
</comment>
<accession>Q9LNK1</accession>
<protein>
    <recommendedName>
        <fullName>Ras-related protein RABA3</fullName>
        <shortName>AtRABA3</shortName>
    </recommendedName>
</protein>
<keyword id="KW-0967">Endosome</keyword>
<keyword id="KW-0333">Golgi apparatus</keyword>
<keyword id="KW-0342">GTP-binding</keyword>
<keyword id="KW-0449">Lipoprotein</keyword>
<keyword id="KW-0472">Membrane</keyword>
<keyword id="KW-0488">Methylation</keyword>
<keyword id="KW-0547">Nucleotide-binding</keyword>
<keyword id="KW-0636">Prenylation</keyword>
<keyword id="KW-0653">Protein transport</keyword>
<keyword id="KW-1185">Reference proteome</keyword>
<keyword id="KW-0813">Transport</keyword>
<organism>
    <name type="scientific">Arabidopsis thaliana</name>
    <name type="common">Mouse-ear cress</name>
    <dbReference type="NCBI Taxonomy" id="3702"/>
    <lineage>
        <taxon>Eukaryota</taxon>
        <taxon>Viridiplantae</taxon>
        <taxon>Streptophyta</taxon>
        <taxon>Embryophyta</taxon>
        <taxon>Tracheophyta</taxon>
        <taxon>Spermatophyta</taxon>
        <taxon>Magnoliopsida</taxon>
        <taxon>eudicotyledons</taxon>
        <taxon>Gunneridae</taxon>
        <taxon>Pentapetalae</taxon>
        <taxon>rosids</taxon>
        <taxon>malvids</taxon>
        <taxon>Brassicales</taxon>
        <taxon>Brassicaceae</taxon>
        <taxon>Camelineae</taxon>
        <taxon>Arabidopsis</taxon>
    </lineage>
</organism>
<proteinExistence type="evidence at transcript level"/>